<accession>B1L8X5</accession>
<protein>
    <recommendedName>
        <fullName evidence="1">tRNA-specific 2-thiouridylase MnmA</fullName>
        <ecNumber evidence="1">2.8.1.13</ecNumber>
    </recommendedName>
</protein>
<gene>
    <name evidence="1" type="primary">mnmA</name>
    <name type="ordered locus">TRQ2_0417</name>
</gene>
<proteinExistence type="inferred from homology"/>
<comment type="function">
    <text evidence="1">Catalyzes the 2-thiolation of uridine at the wobble position (U34) of tRNA, leading to the formation of s(2)U34.</text>
</comment>
<comment type="catalytic activity">
    <reaction evidence="1">
        <text>S-sulfanyl-L-cysteinyl-[protein] + uridine(34) in tRNA + AH2 + ATP = 2-thiouridine(34) in tRNA + L-cysteinyl-[protein] + A + AMP + diphosphate + H(+)</text>
        <dbReference type="Rhea" id="RHEA:47032"/>
        <dbReference type="Rhea" id="RHEA-COMP:10131"/>
        <dbReference type="Rhea" id="RHEA-COMP:11726"/>
        <dbReference type="Rhea" id="RHEA-COMP:11727"/>
        <dbReference type="Rhea" id="RHEA-COMP:11728"/>
        <dbReference type="ChEBI" id="CHEBI:13193"/>
        <dbReference type="ChEBI" id="CHEBI:15378"/>
        <dbReference type="ChEBI" id="CHEBI:17499"/>
        <dbReference type="ChEBI" id="CHEBI:29950"/>
        <dbReference type="ChEBI" id="CHEBI:30616"/>
        <dbReference type="ChEBI" id="CHEBI:33019"/>
        <dbReference type="ChEBI" id="CHEBI:61963"/>
        <dbReference type="ChEBI" id="CHEBI:65315"/>
        <dbReference type="ChEBI" id="CHEBI:87170"/>
        <dbReference type="ChEBI" id="CHEBI:456215"/>
        <dbReference type="EC" id="2.8.1.13"/>
    </reaction>
</comment>
<comment type="subcellular location">
    <subcellularLocation>
        <location evidence="1">Cytoplasm</location>
    </subcellularLocation>
</comment>
<comment type="similarity">
    <text evidence="1">Belongs to the MnmA/TRMU family.</text>
</comment>
<sequence length="358" mass="40572">MKVGVALSGGVDSAVALYLLLKEGHEVKAFHMKTKEDEFFLKKEIKKKVCCSPSDTADAIRIARSLGVEIEIVDVREVFREKVIEPFKRDLLRGLTPNPCVHCNRYVKFGYFMDYVLSQGFDAFASGHYARVEFSGKYGKKVIKKGVDGKKDQSYFLARIEPWRIEKLLFPNGIYTKEEIRRIAEEAGIHVAKKQESQDVCFIPDGSIENFLKDEGITLSEGKVITEKGEVVGHHRGYPLYTVGQRKGLKIEKFGERLYVREKIPESNVVVVSGLEDVFFSGLIAEDPVWHVEVPEEFRCVCRVRKKSEEAPAVVRVRDNEVEVRFEKKVFAVTPGQIAAFYDEDTLLGGAIIKEGIR</sequence>
<keyword id="KW-0067">ATP-binding</keyword>
<keyword id="KW-0963">Cytoplasm</keyword>
<keyword id="KW-1015">Disulfide bond</keyword>
<keyword id="KW-0547">Nucleotide-binding</keyword>
<keyword id="KW-0694">RNA-binding</keyword>
<keyword id="KW-0808">Transferase</keyword>
<keyword id="KW-0819">tRNA processing</keyword>
<keyword id="KW-0820">tRNA-binding</keyword>
<name>MNMA_THESQ</name>
<evidence type="ECO:0000255" key="1">
    <source>
        <dbReference type="HAMAP-Rule" id="MF_00144"/>
    </source>
</evidence>
<dbReference type="EC" id="2.8.1.13" evidence="1"/>
<dbReference type="EMBL" id="CP000969">
    <property type="protein sequence ID" value="ACB08773.1"/>
    <property type="molecule type" value="Genomic_DNA"/>
</dbReference>
<dbReference type="RefSeq" id="WP_012310533.1">
    <property type="nucleotide sequence ID" value="NC_010483.1"/>
</dbReference>
<dbReference type="SMR" id="B1L8X5"/>
<dbReference type="KEGG" id="trq:TRQ2_0417"/>
<dbReference type="HOGENOM" id="CLU_035188_1_0_0"/>
<dbReference type="Proteomes" id="UP000001687">
    <property type="component" value="Chromosome"/>
</dbReference>
<dbReference type="GO" id="GO:0005737">
    <property type="term" value="C:cytoplasm"/>
    <property type="evidence" value="ECO:0007669"/>
    <property type="project" value="UniProtKB-SubCell"/>
</dbReference>
<dbReference type="GO" id="GO:0005524">
    <property type="term" value="F:ATP binding"/>
    <property type="evidence" value="ECO:0007669"/>
    <property type="project" value="UniProtKB-KW"/>
</dbReference>
<dbReference type="GO" id="GO:0000049">
    <property type="term" value="F:tRNA binding"/>
    <property type="evidence" value="ECO:0007669"/>
    <property type="project" value="UniProtKB-KW"/>
</dbReference>
<dbReference type="GO" id="GO:0103016">
    <property type="term" value="F:tRNA-uridine 2-sulfurtransferase activity"/>
    <property type="evidence" value="ECO:0007669"/>
    <property type="project" value="UniProtKB-EC"/>
</dbReference>
<dbReference type="GO" id="GO:0002143">
    <property type="term" value="P:tRNA wobble position uridine thiolation"/>
    <property type="evidence" value="ECO:0007669"/>
    <property type="project" value="TreeGrafter"/>
</dbReference>
<dbReference type="CDD" id="cd01998">
    <property type="entry name" value="MnmA_TRMU-like"/>
    <property type="match status" value="1"/>
</dbReference>
<dbReference type="FunFam" id="2.30.30.280:FF:000001">
    <property type="entry name" value="tRNA-specific 2-thiouridylase MnmA"/>
    <property type="match status" value="1"/>
</dbReference>
<dbReference type="FunFam" id="2.40.30.10:FF:000242">
    <property type="entry name" value="tRNA-specific 2-thiouridylase MnmA"/>
    <property type="match status" value="1"/>
</dbReference>
<dbReference type="FunFam" id="3.40.50.620:FF:000302">
    <property type="entry name" value="tRNA-specific 2-thiouridylase MnmA"/>
    <property type="match status" value="1"/>
</dbReference>
<dbReference type="Gene3D" id="2.30.30.280">
    <property type="entry name" value="Adenine nucleotide alpha hydrolases-like domains"/>
    <property type="match status" value="1"/>
</dbReference>
<dbReference type="Gene3D" id="3.40.50.620">
    <property type="entry name" value="HUPs"/>
    <property type="match status" value="1"/>
</dbReference>
<dbReference type="Gene3D" id="2.40.30.10">
    <property type="entry name" value="Translation factors"/>
    <property type="match status" value="1"/>
</dbReference>
<dbReference type="HAMAP" id="MF_00144">
    <property type="entry name" value="tRNA_thiouridyl_MnmA"/>
    <property type="match status" value="1"/>
</dbReference>
<dbReference type="InterPro" id="IPR004506">
    <property type="entry name" value="MnmA-like"/>
</dbReference>
<dbReference type="InterPro" id="IPR046885">
    <property type="entry name" value="MnmA-like_C"/>
</dbReference>
<dbReference type="InterPro" id="IPR046884">
    <property type="entry name" value="MnmA-like_central"/>
</dbReference>
<dbReference type="InterPro" id="IPR023382">
    <property type="entry name" value="MnmA-like_central_sf"/>
</dbReference>
<dbReference type="InterPro" id="IPR014729">
    <property type="entry name" value="Rossmann-like_a/b/a_fold"/>
</dbReference>
<dbReference type="NCBIfam" id="NF001138">
    <property type="entry name" value="PRK00143.1"/>
    <property type="match status" value="1"/>
</dbReference>
<dbReference type="NCBIfam" id="TIGR00420">
    <property type="entry name" value="trmU"/>
    <property type="match status" value="1"/>
</dbReference>
<dbReference type="PANTHER" id="PTHR11933:SF5">
    <property type="entry name" value="MITOCHONDRIAL TRNA-SPECIFIC 2-THIOURIDYLASE 1"/>
    <property type="match status" value="1"/>
</dbReference>
<dbReference type="PANTHER" id="PTHR11933">
    <property type="entry name" value="TRNA 5-METHYLAMINOMETHYL-2-THIOURIDYLATE -METHYLTRANSFERASE"/>
    <property type="match status" value="1"/>
</dbReference>
<dbReference type="Pfam" id="PF03054">
    <property type="entry name" value="tRNA_Me_trans"/>
    <property type="match status" value="1"/>
</dbReference>
<dbReference type="Pfam" id="PF20258">
    <property type="entry name" value="tRNA_Me_trans_C"/>
    <property type="match status" value="1"/>
</dbReference>
<dbReference type="Pfam" id="PF20259">
    <property type="entry name" value="tRNA_Me_trans_M"/>
    <property type="match status" value="1"/>
</dbReference>
<dbReference type="SUPFAM" id="SSF52402">
    <property type="entry name" value="Adenine nucleotide alpha hydrolases-like"/>
    <property type="match status" value="1"/>
</dbReference>
<organism>
    <name type="scientific">Thermotoga sp. (strain RQ2)</name>
    <dbReference type="NCBI Taxonomy" id="126740"/>
    <lineage>
        <taxon>Bacteria</taxon>
        <taxon>Thermotogati</taxon>
        <taxon>Thermotogota</taxon>
        <taxon>Thermotogae</taxon>
        <taxon>Thermotogales</taxon>
        <taxon>Thermotogaceae</taxon>
        <taxon>Thermotoga</taxon>
    </lineage>
</organism>
<feature type="chain" id="PRO_0000349845" description="tRNA-specific 2-thiouridylase MnmA">
    <location>
        <begin position="1"/>
        <end position="358"/>
    </location>
</feature>
<feature type="region of interest" description="Interaction with tRNA" evidence="1">
    <location>
        <begin position="151"/>
        <end position="153"/>
    </location>
</feature>
<feature type="active site" description="Nucleophile" evidence="1">
    <location>
        <position position="103"/>
    </location>
</feature>
<feature type="active site" description="Cysteine persulfide intermediate" evidence="1">
    <location>
        <position position="201"/>
    </location>
</feature>
<feature type="binding site" evidence="1">
    <location>
        <begin position="6"/>
        <end position="13"/>
    </location>
    <ligand>
        <name>ATP</name>
        <dbReference type="ChEBI" id="CHEBI:30616"/>
    </ligand>
</feature>
<feature type="binding site" evidence="1">
    <location>
        <position position="32"/>
    </location>
    <ligand>
        <name>ATP</name>
        <dbReference type="ChEBI" id="CHEBI:30616"/>
    </ligand>
</feature>
<feature type="binding site" evidence="1">
    <location>
        <position position="127"/>
    </location>
    <ligand>
        <name>ATP</name>
        <dbReference type="ChEBI" id="CHEBI:30616"/>
    </ligand>
</feature>
<feature type="site" description="Interaction with tRNA" evidence="1">
    <location>
        <position position="128"/>
    </location>
</feature>
<feature type="site" description="Interaction with tRNA" evidence="1">
    <location>
        <position position="337"/>
    </location>
</feature>
<feature type="disulfide bond" description="Alternate" evidence="1">
    <location>
        <begin position="103"/>
        <end position="201"/>
    </location>
</feature>
<reference key="1">
    <citation type="journal article" date="2011" name="J. Bacteriol.">
        <title>Genome sequence of Thermotoga sp. strain RQ2, a hyperthermophilic bacterium isolated from a geothermally heated region of the seafloor near Ribeira Quente, the Azores.</title>
        <authorList>
            <person name="Swithers K.S."/>
            <person name="DiPippo J.L."/>
            <person name="Bruce D.C."/>
            <person name="Detter C."/>
            <person name="Tapia R."/>
            <person name="Han S."/>
            <person name="Saunders E."/>
            <person name="Goodwin L.A."/>
            <person name="Han J."/>
            <person name="Woyke T."/>
            <person name="Pitluck S."/>
            <person name="Pennacchio L."/>
            <person name="Nolan M."/>
            <person name="Mikhailova N."/>
            <person name="Lykidis A."/>
            <person name="Land M.L."/>
            <person name="Brettin T."/>
            <person name="Stetter K.O."/>
            <person name="Nelson K.E."/>
            <person name="Gogarten J.P."/>
            <person name="Noll K.M."/>
        </authorList>
    </citation>
    <scope>NUCLEOTIDE SEQUENCE [LARGE SCALE GENOMIC DNA]</scope>
    <source>
        <strain>RQ2</strain>
    </source>
</reference>